<name>YBEY_RUBXD</name>
<accession>Q1AVV7</accession>
<keyword id="KW-0963">Cytoplasm</keyword>
<keyword id="KW-0255">Endonuclease</keyword>
<keyword id="KW-0378">Hydrolase</keyword>
<keyword id="KW-0479">Metal-binding</keyword>
<keyword id="KW-0540">Nuclease</keyword>
<keyword id="KW-1185">Reference proteome</keyword>
<keyword id="KW-0690">Ribosome biogenesis</keyword>
<keyword id="KW-0698">rRNA processing</keyword>
<keyword id="KW-0862">Zinc</keyword>
<proteinExistence type="inferred from homology"/>
<evidence type="ECO:0000255" key="1">
    <source>
        <dbReference type="HAMAP-Rule" id="MF_00009"/>
    </source>
</evidence>
<comment type="function">
    <text evidence="1">Single strand-specific metallo-endoribonuclease involved in late-stage 70S ribosome quality control and in maturation of the 3' terminus of the 16S rRNA.</text>
</comment>
<comment type="cofactor">
    <cofactor evidence="1">
        <name>Zn(2+)</name>
        <dbReference type="ChEBI" id="CHEBI:29105"/>
    </cofactor>
    <text evidence="1">Binds 1 zinc ion.</text>
</comment>
<comment type="subcellular location">
    <subcellularLocation>
        <location evidence="1">Cytoplasm</location>
    </subcellularLocation>
</comment>
<comment type="similarity">
    <text evidence="1">Belongs to the endoribonuclease YbeY family.</text>
</comment>
<protein>
    <recommendedName>
        <fullName evidence="1">Endoribonuclease YbeY</fullName>
        <ecNumber evidence="1">3.1.-.-</ecNumber>
    </recommendedName>
</protein>
<organism>
    <name type="scientific">Rubrobacter xylanophilus (strain DSM 9941 / JCM 11954 / NBRC 16129 / PRD-1)</name>
    <dbReference type="NCBI Taxonomy" id="266117"/>
    <lineage>
        <taxon>Bacteria</taxon>
        <taxon>Bacillati</taxon>
        <taxon>Actinomycetota</taxon>
        <taxon>Rubrobacteria</taxon>
        <taxon>Rubrobacterales</taxon>
        <taxon>Rubrobacteraceae</taxon>
        <taxon>Rubrobacter</taxon>
    </lineage>
</organism>
<gene>
    <name evidence="1" type="primary">ybeY</name>
    <name type="ordered locus">Rxyl_1509</name>
</gene>
<reference key="1">
    <citation type="submission" date="2006-06" db="EMBL/GenBank/DDBJ databases">
        <title>Complete sequence of Rubrobacter xylanophilus DSM 9941.</title>
        <authorList>
            <consortium name="US DOE Joint Genome Institute"/>
            <person name="Copeland A."/>
            <person name="Lucas S."/>
            <person name="Lapidus A."/>
            <person name="Barry K."/>
            <person name="Detter J.C."/>
            <person name="Glavina del Rio T."/>
            <person name="Hammon N."/>
            <person name="Israni S."/>
            <person name="Dalin E."/>
            <person name="Tice H."/>
            <person name="Pitluck S."/>
            <person name="Munk A.C."/>
            <person name="Brettin T."/>
            <person name="Bruce D."/>
            <person name="Han C."/>
            <person name="Tapia R."/>
            <person name="Gilna P."/>
            <person name="Schmutz J."/>
            <person name="Larimer F."/>
            <person name="Land M."/>
            <person name="Hauser L."/>
            <person name="Kyrpides N."/>
            <person name="Lykidis A."/>
            <person name="da Costa M.S."/>
            <person name="Rainey F.A."/>
            <person name="Empadinhas N."/>
            <person name="Jolivet E."/>
            <person name="Battista J.R."/>
            <person name="Richardson P."/>
        </authorList>
    </citation>
    <scope>NUCLEOTIDE SEQUENCE [LARGE SCALE GENOMIC DNA]</scope>
    <source>
        <strain>DSM 9941 / JCM 11954 / NBRC 16129 / PRD-1</strain>
    </source>
</reference>
<sequence>MPFRVEVLNETSGGARLTPERATELCRRAFVERGLDPERMGELSVALVEPEVIHDLNLKFRNKDAPTDVLSFEVDGPYGEMVGEIVICPGCAEMDLEELVVHGALHLSGMDHGENFEASEMARVQKRVMEAVRGR</sequence>
<dbReference type="EC" id="3.1.-.-" evidence="1"/>
<dbReference type="EMBL" id="CP000386">
    <property type="protein sequence ID" value="ABG04471.1"/>
    <property type="molecule type" value="Genomic_DNA"/>
</dbReference>
<dbReference type="RefSeq" id="WP_011564488.1">
    <property type="nucleotide sequence ID" value="NC_008148.1"/>
</dbReference>
<dbReference type="SMR" id="Q1AVV7"/>
<dbReference type="STRING" id="266117.Rxyl_1509"/>
<dbReference type="KEGG" id="rxy:Rxyl_1509"/>
<dbReference type="eggNOG" id="COG0319">
    <property type="taxonomic scope" value="Bacteria"/>
</dbReference>
<dbReference type="HOGENOM" id="CLU_106710_3_1_11"/>
<dbReference type="PhylomeDB" id="Q1AVV7"/>
<dbReference type="Proteomes" id="UP000006637">
    <property type="component" value="Chromosome"/>
</dbReference>
<dbReference type="GO" id="GO:0005737">
    <property type="term" value="C:cytoplasm"/>
    <property type="evidence" value="ECO:0007669"/>
    <property type="project" value="UniProtKB-SubCell"/>
</dbReference>
<dbReference type="GO" id="GO:0004222">
    <property type="term" value="F:metalloendopeptidase activity"/>
    <property type="evidence" value="ECO:0007669"/>
    <property type="project" value="InterPro"/>
</dbReference>
<dbReference type="GO" id="GO:0004521">
    <property type="term" value="F:RNA endonuclease activity"/>
    <property type="evidence" value="ECO:0007669"/>
    <property type="project" value="UniProtKB-UniRule"/>
</dbReference>
<dbReference type="GO" id="GO:0008270">
    <property type="term" value="F:zinc ion binding"/>
    <property type="evidence" value="ECO:0007669"/>
    <property type="project" value="UniProtKB-UniRule"/>
</dbReference>
<dbReference type="GO" id="GO:0006364">
    <property type="term" value="P:rRNA processing"/>
    <property type="evidence" value="ECO:0007669"/>
    <property type="project" value="UniProtKB-UniRule"/>
</dbReference>
<dbReference type="Gene3D" id="3.40.390.30">
    <property type="entry name" value="Metalloproteases ('zincins'), catalytic domain"/>
    <property type="match status" value="1"/>
</dbReference>
<dbReference type="HAMAP" id="MF_00009">
    <property type="entry name" value="Endoribonucl_YbeY"/>
    <property type="match status" value="1"/>
</dbReference>
<dbReference type="InterPro" id="IPR023091">
    <property type="entry name" value="MetalPrtase_cat_dom_sf_prd"/>
</dbReference>
<dbReference type="InterPro" id="IPR002036">
    <property type="entry name" value="YbeY"/>
</dbReference>
<dbReference type="InterPro" id="IPR020549">
    <property type="entry name" value="YbeY_CS"/>
</dbReference>
<dbReference type="NCBIfam" id="TIGR00043">
    <property type="entry name" value="rRNA maturation RNase YbeY"/>
    <property type="match status" value="1"/>
</dbReference>
<dbReference type="PANTHER" id="PTHR46986">
    <property type="entry name" value="ENDORIBONUCLEASE YBEY, CHLOROPLASTIC"/>
    <property type="match status" value="1"/>
</dbReference>
<dbReference type="PANTHER" id="PTHR46986:SF1">
    <property type="entry name" value="ENDORIBONUCLEASE YBEY, CHLOROPLASTIC"/>
    <property type="match status" value="1"/>
</dbReference>
<dbReference type="Pfam" id="PF02130">
    <property type="entry name" value="YbeY"/>
    <property type="match status" value="1"/>
</dbReference>
<dbReference type="SUPFAM" id="SSF55486">
    <property type="entry name" value="Metalloproteases ('zincins'), catalytic domain"/>
    <property type="match status" value="1"/>
</dbReference>
<dbReference type="PROSITE" id="PS01306">
    <property type="entry name" value="UPF0054"/>
    <property type="match status" value="1"/>
</dbReference>
<feature type="chain" id="PRO_0000284298" description="Endoribonuclease YbeY">
    <location>
        <begin position="1"/>
        <end position="135"/>
    </location>
</feature>
<feature type="binding site" evidence="1">
    <location>
        <position position="102"/>
    </location>
    <ligand>
        <name>Zn(2+)</name>
        <dbReference type="ChEBI" id="CHEBI:29105"/>
        <note>catalytic</note>
    </ligand>
</feature>
<feature type="binding site" evidence="1">
    <location>
        <position position="106"/>
    </location>
    <ligand>
        <name>Zn(2+)</name>
        <dbReference type="ChEBI" id="CHEBI:29105"/>
        <note>catalytic</note>
    </ligand>
</feature>
<feature type="binding site" evidence="1">
    <location>
        <position position="112"/>
    </location>
    <ligand>
        <name>Zn(2+)</name>
        <dbReference type="ChEBI" id="CHEBI:29105"/>
        <note>catalytic</note>
    </ligand>
</feature>